<feature type="chain" id="PRO_0000131295" description="Large ribosomal subunit protein uL18">
    <location>
        <begin position="1"/>
        <end position="115"/>
    </location>
</feature>
<organism>
    <name type="scientific">Mycoplasma genitalium (strain ATCC 33530 / DSM 19775 / NCTC 10195 / G37)</name>
    <name type="common">Mycoplasmoides genitalium</name>
    <dbReference type="NCBI Taxonomy" id="243273"/>
    <lineage>
        <taxon>Bacteria</taxon>
        <taxon>Bacillati</taxon>
        <taxon>Mycoplasmatota</taxon>
        <taxon>Mycoplasmoidales</taxon>
        <taxon>Mycoplasmoidaceae</taxon>
        <taxon>Mycoplasmoides</taxon>
    </lineage>
</organism>
<accession>P47413</accession>
<evidence type="ECO:0000255" key="1">
    <source>
        <dbReference type="HAMAP-Rule" id="MF_01337"/>
    </source>
</evidence>
<evidence type="ECO:0000305" key="2"/>
<protein>
    <recommendedName>
        <fullName evidence="1">Large ribosomal subunit protein uL18</fullName>
    </recommendedName>
    <alternativeName>
        <fullName evidence="2">50S ribosomal protein L18</fullName>
    </alternativeName>
</protein>
<proteinExistence type="inferred from homology"/>
<sequence>MTRNDKRRIRHKRIVKKIRLTNLNNRVVLIVIKSLKNISVQAWDFSKNVVLTSSSSLQLKLKNGNKENAKLVGMDIATKLIKLNQKDVVFDTGGSKYHGRIAALAEGARAKGLNF</sequence>
<keyword id="KW-1185">Reference proteome</keyword>
<keyword id="KW-0687">Ribonucleoprotein</keyword>
<keyword id="KW-0689">Ribosomal protein</keyword>
<keyword id="KW-0694">RNA-binding</keyword>
<keyword id="KW-0699">rRNA-binding</keyword>
<comment type="function">
    <text evidence="1">This is one of the proteins that bind and probably mediate the attachment of the 5S RNA into the large ribosomal subunit, where it forms part of the central protuberance.</text>
</comment>
<comment type="subunit">
    <text evidence="1">Part of the 50S ribosomal subunit; part of the 5S rRNA/L5/L18/L25 subcomplex. Contacts the 5S and 23S rRNAs.</text>
</comment>
<comment type="similarity">
    <text evidence="1">Belongs to the universal ribosomal protein uL18 family.</text>
</comment>
<dbReference type="EMBL" id="L43967">
    <property type="protein sequence ID" value="AAC71385.1"/>
    <property type="molecule type" value="Genomic_DNA"/>
</dbReference>
<dbReference type="PIR" id="E64218">
    <property type="entry name" value="E64218"/>
</dbReference>
<dbReference type="RefSeq" id="WP_009885853.1">
    <property type="nucleotide sequence ID" value="NC_000908.2"/>
</dbReference>
<dbReference type="SMR" id="P47413"/>
<dbReference type="FunCoup" id="P47413">
    <property type="interactions" value="197"/>
</dbReference>
<dbReference type="STRING" id="243273.MG_167"/>
<dbReference type="GeneID" id="88282300"/>
<dbReference type="KEGG" id="mge:MG_167"/>
<dbReference type="eggNOG" id="COG0256">
    <property type="taxonomic scope" value="Bacteria"/>
</dbReference>
<dbReference type="HOGENOM" id="CLU_098841_0_1_14"/>
<dbReference type="InParanoid" id="P47413"/>
<dbReference type="OrthoDB" id="9810939at2"/>
<dbReference type="BioCyc" id="MGEN243273:G1GJ2-191-MONOMER"/>
<dbReference type="Proteomes" id="UP000000807">
    <property type="component" value="Chromosome"/>
</dbReference>
<dbReference type="GO" id="GO:0022625">
    <property type="term" value="C:cytosolic large ribosomal subunit"/>
    <property type="evidence" value="ECO:0000318"/>
    <property type="project" value="GO_Central"/>
</dbReference>
<dbReference type="GO" id="GO:0008097">
    <property type="term" value="F:5S rRNA binding"/>
    <property type="evidence" value="ECO:0000318"/>
    <property type="project" value="GO_Central"/>
</dbReference>
<dbReference type="GO" id="GO:0003735">
    <property type="term" value="F:structural constituent of ribosome"/>
    <property type="evidence" value="ECO:0007669"/>
    <property type="project" value="InterPro"/>
</dbReference>
<dbReference type="GO" id="GO:0006412">
    <property type="term" value="P:translation"/>
    <property type="evidence" value="ECO:0007669"/>
    <property type="project" value="UniProtKB-UniRule"/>
</dbReference>
<dbReference type="CDD" id="cd00432">
    <property type="entry name" value="Ribosomal_L18_L5e"/>
    <property type="match status" value="1"/>
</dbReference>
<dbReference type="Gene3D" id="3.30.420.100">
    <property type="match status" value="1"/>
</dbReference>
<dbReference type="HAMAP" id="MF_01337_B">
    <property type="entry name" value="Ribosomal_uL18_B"/>
    <property type="match status" value="1"/>
</dbReference>
<dbReference type="InterPro" id="IPR004389">
    <property type="entry name" value="Ribosomal_uL18_bac-type"/>
</dbReference>
<dbReference type="InterPro" id="IPR005484">
    <property type="entry name" value="Ribosomal_uL18_bac/euk"/>
</dbReference>
<dbReference type="NCBIfam" id="TIGR00060">
    <property type="entry name" value="L18_bact"/>
    <property type="match status" value="1"/>
</dbReference>
<dbReference type="Pfam" id="PF00861">
    <property type="entry name" value="Ribosomal_L18p"/>
    <property type="match status" value="1"/>
</dbReference>
<dbReference type="SUPFAM" id="SSF53137">
    <property type="entry name" value="Translational machinery components"/>
    <property type="match status" value="1"/>
</dbReference>
<reference key="1">
    <citation type="journal article" date="1995" name="Science">
        <title>The minimal gene complement of Mycoplasma genitalium.</title>
        <authorList>
            <person name="Fraser C.M."/>
            <person name="Gocayne J.D."/>
            <person name="White O."/>
            <person name="Adams M.D."/>
            <person name="Clayton R.A."/>
            <person name="Fleischmann R.D."/>
            <person name="Bult C.J."/>
            <person name="Kerlavage A.R."/>
            <person name="Sutton G.G."/>
            <person name="Kelley J.M."/>
            <person name="Fritchman J.L."/>
            <person name="Weidman J.F."/>
            <person name="Small K.V."/>
            <person name="Sandusky M."/>
            <person name="Fuhrmann J.L."/>
            <person name="Nguyen D.T."/>
            <person name="Utterback T.R."/>
            <person name="Saudek D.M."/>
            <person name="Phillips C.A."/>
            <person name="Merrick J.M."/>
            <person name="Tomb J.-F."/>
            <person name="Dougherty B.A."/>
            <person name="Bott K.F."/>
            <person name="Hu P.-C."/>
            <person name="Lucier T.S."/>
            <person name="Peterson S.N."/>
            <person name="Smith H.O."/>
            <person name="Hutchison C.A. III"/>
            <person name="Venter J.C."/>
        </authorList>
    </citation>
    <scope>NUCLEOTIDE SEQUENCE [LARGE SCALE GENOMIC DNA]</scope>
    <source>
        <strain>ATCC 33530 / DSM 19775 / NCTC 10195 / G37</strain>
    </source>
</reference>
<gene>
    <name evidence="1" type="primary">rplR</name>
    <name evidence="1" type="synonym">rpl18</name>
    <name type="ordered locus">MG167</name>
</gene>
<name>RL18_MYCGE</name>